<reference key="1">
    <citation type="journal article" date="2001" name="DNA Res.">
        <title>Complete genome sequence of an aerobic thermoacidophilic Crenarchaeon, Sulfolobus tokodaii strain7.</title>
        <authorList>
            <person name="Kawarabayasi Y."/>
            <person name="Hino Y."/>
            <person name="Horikawa H."/>
            <person name="Jin-no K."/>
            <person name="Takahashi M."/>
            <person name="Sekine M."/>
            <person name="Baba S."/>
            <person name="Ankai A."/>
            <person name="Kosugi H."/>
            <person name="Hosoyama A."/>
            <person name="Fukui S."/>
            <person name="Nagai Y."/>
            <person name="Nishijima K."/>
            <person name="Otsuka R."/>
            <person name="Nakazawa H."/>
            <person name="Takamiya M."/>
            <person name="Kato Y."/>
            <person name="Yoshizawa T."/>
            <person name="Tanaka T."/>
            <person name="Kudoh Y."/>
            <person name="Yamazaki J."/>
            <person name="Kushida N."/>
            <person name="Oguchi A."/>
            <person name="Aoki K."/>
            <person name="Masuda S."/>
            <person name="Yanagii M."/>
            <person name="Nishimura M."/>
            <person name="Yamagishi A."/>
            <person name="Oshima T."/>
            <person name="Kikuchi H."/>
        </authorList>
    </citation>
    <scope>NUCLEOTIDE SEQUENCE [LARGE SCALE GENOMIC DNA]</scope>
    <source>
        <strain>DSM 16993 / JCM 10545 / NBRC 100140 / 7</strain>
    </source>
</reference>
<accession>Q975G7</accession>
<gene>
    <name evidence="1" type="primary">rrp4</name>
    <name type="ordered locus">STK_04440</name>
</gene>
<proteinExistence type="inferred from homology"/>
<dbReference type="EMBL" id="BA000023">
    <property type="protein sequence ID" value="BAB65434.1"/>
    <property type="molecule type" value="Genomic_DNA"/>
</dbReference>
<dbReference type="RefSeq" id="WP_010978417.1">
    <property type="nucleotide sequence ID" value="NC_003106.2"/>
</dbReference>
<dbReference type="SMR" id="Q975G7"/>
<dbReference type="STRING" id="273063.STK_04440"/>
<dbReference type="GeneID" id="95643448"/>
<dbReference type="KEGG" id="sto:STK_04440"/>
<dbReference type="PATRIC" id="fig|273063.9.peg.516"/>
<dbReference type="eggNOG" id="arCOG00678">
    <property type="taxonomic scope" value="Archaea"/>
</dbReference>
<dbReference type="OrthoDB" id="35160at2157"/>
<dbReference type="Proteomes" id="UP000001015">
    <property type="component" value="Chromosome"/>
</dbReference>
<dbReference type="GO" id="GO:0005737">
    <property type="term" value="C:cytoplasm"/>
    <property type="evidence" value="ECO:0007669"/>
    <property type="project" value="UniProtKB-SubCell"/>
</dbReference>
<dbReference type="GO" id="GO:0000178">
    <property type="term" value="C:exosome (RNase complex)"/>
    <property type="evidence" value="ECO:0007669"/>
    <property type="project" value="UniProtKB-KW"/>
</dbReference>
<dbReference type="GO" id="GO:0008143">
    <property type="term" value="F:poly(A) binding"/>
    <property type="evidence" value="ECO:0007669"/>
    <property type="project" value="InterPro"/>
</dbReference>
<dbReference type="GO" id="GO:0071034">
    <property type="term" value="P:CUT catabolic process"/>
    <property type="evidence" value="ECO:0007669"/>
    <property type="project" value="TreeGrafter"/>
</dbReference>
<dbReference type="GO" id="GO:0000467">
    <property type="term" value="P:exonucleolytic trimming to generate mature 3'-end of 5.8S rRNA from tricistronic rRNA transcript (SSU-rRNA, 5.8S rRNA, LSU-rRNA)"/>
    <property type="evidence" value="ECO:0007669"/>
    <property type="project" value="TreeGrafter"/>
</dbReference>
<dbReference type="GO" id="GO:0071051">
    <property type="term" value="P:poly(A)-dependent snoRNA 3'-end processing"/>
    <property type="evidence" value="ECO:0007669"/>
    <property type="project" value="TreeGrafter"/>
</dbReference>
<dbReference type="GO" id="GO:0006401">
    <property type="term" value="P:RNA catabolic process"/>
    <property type="evidence" value="ECO:0007669"/>
    <property type="project" value="UniProtKB-UniRule"/>
</dbReference>
<dbReference type="GO" id="GO:0034475">
    <property type="term" value="P:U4 snRNA 3'-end processing"/>
    <property type="evidence" value="ECO:0007669"/>
    <property type="project" value="TreeGrafter"/>
</dbReference>
<dbReference type="CDD" id="cd22524">
    <property type="entry name" value="KH-I_Rrp4_prokar"/>
    <property type="match status" value="1"/>
</dbReference>
<dbReference type="CDD" id="cd05789">
    <property type="entry name" value="S1_Rrp4"/>
    <property type="match status" value="1"/>
</dbReference>
<dbReference type="Gene3D" id="2.40.50.100">
    <property type="match status" value="1"/>
</dbReference>
<dbReference type="Gene3D" id="3.30.1370.10">
    <property type="entry name" value="K Homology domain, type 1"/>
    <property type="match status" value="1"/>
</dbReference>
<dbReference type="Gene3D" id="2.40.50.140">
    <property type="entry name" value="Nucleic acid-binding proteins"/>
    <property type="match status" value="1"/>
</dbReference>
<dbReference type="HAMAP" id="MF_00623">
    <property type="entry name" value="Exosome_Rrp4"/>
    <property type="match status" value="1"/>
</dbReference>
<dbReference type="InterPro" id="IPR026699">
    <property type="entry name" value="Exosome_RNA_bind1/RRP40/RRP4"/>
</dbReference>
<dbReference type="InterPro" id="IPR004087">
    <property type="entry name" value="KH_dom"/>
</dbReference>
<dbReference type="InterPro" id="IPR004088">
    <property type="entry name" value="KH_dom_type_1"/>
</dbReference>
<dbReference type="InterPro" id="IPR036612">
    <property type="entry name" value="KH_dom_type_1_sf"/>
</dbReference>
<dbReference type="InterPro" id="IPR012340">
    <property type="entry name" value="NA-bd_OB-fold"/>
</dbReference>
<dbReference type="InterPro" id="IPR023474">
    <property type="entry name" value="Rrp4"/>
</dbReference>
<dbReference type="InterPro" id="IPR054371">
    <property type="entry name" value="RRP4_N"/>
</dbReference>
<dbReference type="InterPro" id="IPR048565">
    <property type="entry name" value="RRP4_S1"/>
</dbReference>
<dbReference type="InterPro" id="IPR003029">
    <property type="entry name" value="S1_domain"/>
</dbReference>
<dbReference type="NCBIfam" id="NF003181">
    <property type="entry name" value="PRK04163.1-1"/>
    <property type="match status" value="1"/>
</dbReference>
<dbReference type="PANTHER" id="PTHR21321:SF4">
    <property type="entry name" value="EXOSOME COMPLEX COMPONENT RRP4"/>
    <property type="match status" value="1"/>
</dbReference>
<dbReference type="PANTHER" id="PTHR21321">
    <property type="entry name" value="PNAS-3 RELATED"/>
    <property type="match status" value="1"/>
</dbReference>
<dbReference type="Pfam" id="PF22625">
    <property type="entry name" value="ECR1_N_2"/>
    <property type="match status" value="1"/>
</dbReference>
<dbReference type="Pfam" id="PF15985">
    <property type="entry name" value="KH_6"/>
    <property type="match status" value="1"/>
</dbReference>
<dbReference type="SMART" id="SM00322">
    <property type="entry name" value="KH"/>
    <property type="match status" value="1"/>
</dbReference>
<dbReference type="SMART" id="SM00316">
    <property type="entry name" value="S1"/>
    <property type="match status" value="1"/>
</dbReference>
<dbReference type="SUPFAM" id="SSF54791">
    <property type="entry name" value="Eukaryotic type KH-domain (KH-domain type I)"/>
    <property type="match status" value="1"/>
</dbReference>
<dbReference type="SUPFAM" id="SSF50249">
    <property type="entry name" value="Nucleic acid-binding proteins"/>
    <property type="match status" value="1"/>
</dbReference>
<dbReference type="SUPFAM" id="SSF110324">
    <property type="entry name" value="Ribosomal L27 protein-like"/>
    <property type="match status" value="1"/>
</dbReference>
<dbReference type="PROSITE" id="PS50084">
    <property type="entry name" value="KH_TYPE_1"/>
    <property type="match status" value="1"/>
</dbReference>
<dbReference type="PROSITE" id="PS50126">
    <property type="entry name" value="S1"/>
    <property type="match status" value="1"/>
</dbReference>
<name>RRP4_SULTO</name>
<evidence type="ECO:0000255" key="1">
    <source>
        <dbReference type="HAMAP-Rule" id="MF_00623"/>
    </source>
</evidence>
<feature type="chain" id="PRO_0000050157" description="Exosome complex component Rrp4">
    <location>
        <begin position="1"/>
        <end position="247"/>
    </location>
</feature>
<feature type="domain" description="S1 motif" evidence="1">
    <location>
        <begin position="70"/>
        <end position="143"/>
    </location>
</feature>
<feature type="domain" description="KH" evidence="1">
    <location>
        <begin position="149"/>
        <end position="211"/>
    </location>
</feature>
<sequence length="247" mass="27575">MSNSKIYFEDRSIVTPGDLIAEGDFQIPWSPYYYKIGNKYYSSITGLIEVKENLFEIVPLEGHRYIPKVGDTVIGLIEDVEIYGWVLDIKSPYSAYLPASSFLGRPVSPGEDLRRYLNLGDYVIAKIETYDRTINPILSIKGKGLGRVSSGIVIDIPPVKVPRVIGKNRSMLDTLTSETGCEILVAQNGRILANCATKMIEEALVEAIQIIEKESHIKGLTEKIRKFLREKLGETKNDSATKTEANT</sequence>
<comment type="function">
    <text evidence="1">Non-catalytic component of the exosome, which is a complex involved in RNA degradation. Increases the RNA binding and the efficiency of RNA degradation. Confers strong poly(A) specificity to the exosome.</text>
</comment>
<comment type="subunit">
    <text evidence="1">Component of the archaeal exosome complex. Forms a trimer of Rrp4 and/or Csl4 subunits. The trimer associates with a hexameric ring-like arrangement composed of 3 Rrp41-Rrp42 heterodimers.</text>
</comment>
<comment type="subcellular location">
    <subcellularLocation>
        <location evidence="1">Cytoplasm</location>
    </subcellularLocation>
</comment>
<comment type="similarity">
    <text evidence="1">Belongs to the RRP4 family.</text>
</comment>
<protein>
    <recommendedName>
        <fullName evidence="1">Exosome complex component Rrp4</fullName>
    </recommendedName>
</protein>
<keyword id="KW-0963">Cytoplasm</keyword>
<keyword id="KW-0271">Exosome</keyword>
<keyword id="KW-1185">Reference proteome</keyword>
<keyword id="KW-0694">RNA-binding</keyword>
<organism>
    <name type="scientific">Sulfurisphaera tokodaii (strain DSM 16993 / JCM 10545 / NBRC 100140 / 7)</name>
    <name type="common">Sulfolobus tokodaii</name>
    <dbReference type="NCBI Taxonomy" id="273063"/>
    <lineage>
        <taxon>Archaea</taxon>
        <taxon>Thermoproteota</taxon>
        <taxon>Thermoprotei</taxon>
        <taxon>Sulfolobales</taxon>
        <taxon>Sulfolobaceae</taxon>
        <taxon>Sulfurisphaera</taxon>
    </lineage>
</organism>